<dbReference type="EC" id="7.1.1.2" evidence="1"/>
<dbReference type="EMBL" id="AC024175">
    <property type="protein sequence ID" value="AAF74304.1"/>
    <property type="molecule type" value="Genomic_DNA"/>
</dbReference>
<dbReference type="RefSeq" id="NP_059338.1">
    <property type="nucleotide sequence ID" value="NC_002333.2"/>
</dbReference>
<dbReference type="SMR" id="Q9MIY3"/>
<dbReference type="FunCoup" id="Q9MIY3">
    <property type="interactions" value="52"/>
</dbReference>
<dbReference type="STRING" id="7955.ENSDARP00000087876"/>
<dbReference type="PaxDb" id="7955-ENSDARP00000087876"/>
<dbReference type="Ensembl" id="ENSDART00000093615">
    <property type="protein sequence ID" value="ENSDARP00000087876"/>
    <property type="gene ID" value="ENSDARG00000063914"/>
</dbReference>
<dbReference type="GeneID" id="140533"/>
<dbReference type="KEGG" id="dre:140533"/>
<dbReference type="AGR" id="ZFIN:ZDB-GENE-011205-9"/>
<dbReference type="CTD" id="4537"/>
<dbReference type="ZFIN" id="ZDB-GENE-011205-9">
    <property type="gene designation" value="mt-nd3"/>
</dbReference>
<dbReference type="eggNOG" id="KOG4662">
    <property type="taxonomic scope" value="Eukaryota"/>
</dbReference>
<dbReference type="HOGENOM" id="CLU_119549_3_1_1"/>
<dbReference type="InParanoid" id="Q9MIY3"/>
<dbReference type="OMA" id="GPRRYNR"/>
<dbReference type="OrthoDB" id="154075at2759"/>
<dbReference type="PhylomeDB" id="Q9MIY3"/>
<dbReference type="TreeFam" id="TF343336"/>
<dbReference type="Reactome" id="R-DRE-611105">
    <property type="pathway name" value="Respiratory electron transport"/>
</dbReference>
<dbReference type="PRO" id="PR:Q9MIY3"/>
<dbReference type="Proteomes" id="UP000000437">
    <property type="component" value="Mitochondrion MT"/>
</dbReference>
<dbReference type="Bgee" id="ENSDARG00000063914">
    <property type="expression patterns" value="Expressed in brain and 21 other cell types or tissues"/>
</dbReference>
<dbReference type="GO" id="GO:0005743">
    <property type="term" value="C:mitochondrial inner membrane"/>
    <property type="evidence" value="ECO:0000250"/>
    <property type="project" value="UniProtKB"/>
</dbReference>
<dbReference type="GO" id="GO:0045271">
    <property type="term" value="C:respiratory chain complex I"/>
    <property type="evidence" value="ECO:0000318"/>
    <property type="project" value="GO_Central"/>
</dbReference>
<dbReference type="GO" id="GO:0008137">
    <property type="term" value="F:NADH dehydrogenase (ubiquinone) activity"/>
    <property type="evidence" value="ECO:0000250"/>
    <property type="project" value="UniProtKB"/>
</dbReference>
<dbReference type="GO" id="GO:0006120">
    <property type="term" value="P:mitochondrial electron transport, NADH to ubiquinone"/>
    <property type="evidence" value="ECO:0000250"/>
    <property type="project" value="UniProtKB"/>
</dbReference>
<dbReference type="FunFam" id="1.20.58.1610:FF:000004">
    <property type="entry name" value="NADH-quinone oxidoreductase subunit A"/>
    <property type="match status" value="1"/>
</dbReference>
<dbReference type="Gene3D" id="1.20.58.1610">
    <property type="entry name" value="NADH:ubiquinone/plastoquinone oxidoreductase, chain 3"/>
    <property type="match status" value="1"/>
</dbReference>
<dbReference type="InterPro" id="IPR000440">
    <property type="entry name" value="NADH_UbQ/plastoQ_OxRdtase_su3"/>
</dbReference>
<dbReference type="InterPro" id="IPR038430">
    <property type="entry name" value="NDAH_ubi_oxred_su3_sf"/>
</dbReference>
<dbReference type="PANTHER" id="PTHR11058">
    <property type="entry name" value="NADH-UBIQUINONE OXIDOREDUCTASE CHAIN 3"/>
    <property type="match status" value="1"/>
</dbReference>
<dbReference type="PANTHER" id="PTHR11058:SF9">
    <property type="entry name" value="NADH-UBIQUINONE OXIDOREDUCTASE CHAIN 3"/>
    <property type="match status" value="1"/>
</dbReference>
<dbReference type="Pfam" id="PF00507">
    <property type="entry name" value="Oxidored_q4"/>
    <property type="match status" value="1"/>
</dbReference>
<protein>
    <recommendedName>
        <fullName>NADH-ubiquinone oxidoreductase chain 3</fullName>
        <ecNumber evidence="1">7.1.1.2</ecNumber>
    </recommendedName>
    <alternativeName>
        <fullName>NADH dehydrogenase subunit 3</fullName>
    </alternativeName>
</protein>
<sequence length="116" mass="13111">MNLFATILIIMTTLSLVLALVSFWLPQMNSDTEKLSPYECGFDPLGSARLPFSLRFFLVAVLFPLFDLEIALLLPLPWGDQLNNPMETLFWAMTVLILLTLGLAYEWAQGGLEWAE</sequence>
<gene>
    <name type="primary">mt-nd3</name>
    <name type="synonym">mtnd3</name>
    <name type="synonym">nd3</name>
</gene>
<comment type="function">
    <text evidence="1">Core subunit of the mitochondrial membrane respiratory chain NADH dehydrogenase (Complex I) which catalyzes electron transfer from NADH through the respiratory chain, using ubiquinone as an electron acceptor. Essential for the catalytic activity of complex I.</text>
</comment>
<comment type="catalytic activity">
    <reaction evidence="1">
        <text>a ubiquinone + NADH + 5 H(+)(in) = a ubiquinol + NAD(+) + 4 H(+)(out)</text>
        <dbReference type="Rhea" id="RHEA:29091"/>
        <dbReference type="Rhea" id="RHEA-COMP:9565"/>
        <dbReference type="Rhea" id="RHEA-COMP:9566"/>
        <dbReference type="ChEBI" id="CHEBI:15378"/>
        <dbReference type="ChEBI" id="CHEBI:16389"/>
        <dbReference type="ChEBI" id="CHEBI:17976"/>
        <dbReference type="ChEBI" id="CHEBI:57540"/>
        <dbReference type="ChEBI" id="CHEBI:57945"/>
        <dbReference type="EC" id="7.1.1.2"/>
    </reaction>
</comment>
<comment type="subunit">
    <text evidence="2">Core subunit of respiratory chain NADH dehydrogenase (Complex I) which is composed of 45 different subunits.</text>
</comment>
<comment type="subcellular location">
    <subcellularLocation>
        <location evidence="2">Mitochondrion inner membrane</location>
        <topology evidence="3">Multi-pass membrane protein</topology>
    </subcellularLocation>
</comment>
<comment type="similarity">
    <text evidence="4">Belongs to the complex I subunit 3 family.</text>
</comment>
<keyword id="KW-0249">Electron transport</keyword>
<keyword id="KW-0472">Membrane</keyword>
<keyword id="KW-0496">Mitochondrion</keyword>
<keyword id="KW-0999">Mitochondrion inner membrane</keyword>
<keyword id="KW-0520">NAD</keyword>
<keyword id="KW-1185">Reference proteome</keyword>
<keyword id="KW-0679">Respiratory chain</keyword>
<keyword id="KW-1278">Translocase</keyword>
<keyword id="KW-0812">Transmembrane</keyword>
<keyword id="KW-1133">Transmembrane helix</keyword>
<keyword id="KW-0813">Transport</keyword>
<keyword id="KW-0830">Ubiquinone</keyword>
<feature type="chain" id="PRO_0000117720" description="NADH-ubiquinone oxidoreductase chain 3">
    <location>
        <begin position="1"/>
        <end position="116"/>
    </location>
</feature>
<feature type="transmembrane region" description="Helical" evidence="3">
    <location>
        <begin position="3"/>
        <end position="23"/>
    </location>
</feature>
<feature type="transmembrane region" description="Helical" evidence="3">
    <location>
        <begin position="56"/>
        <end position="76"/>
    </location>
</feature>
<feature type="transmembrane region" description="Helical" evidence="3">
    <location>
        <begin position="88"/>
        <end position="108"/>
    </location>
</feature>
<accession>Q9MIY3</accession>
<evidence type="ECO:0000250" key="1">
    <source>
        <dbReference type="UniProtKB" id="P03897"/>
    </source>
</evidence>
<evidence type="ECO:0000250" key="2">
    <source>
        <dbReference type="UniProtKB" id="P03898"/>
    </source>
</evidence>
<evidence type="ECO:0000255" key="3"/>
<evidence type="ECO:0000305" key="4"/>
<evidence type="ECO:0000312" key="5">
    <source>
        <dbReference type="Proteomes" id="UP000000437"/>
    </source>
</evidence>
<geneLocation type="mitochondrion"/>
<name>NU3M_DANRE</name>
<reference key="1">
    <citation type="journal article" date="2001" name="Genome Res.">
        <title>The complete sequence of the zebrafish (Danio rerio) mitochondrial genome and evolutionary patterns in vertebrate mitochondrial DNA.</title>
        <authorList>
            <person name="Broughton R.E."/>
            <person name="Milam J.E."/>
            <person name="Roe B.A."/>
        </authorList>
    </citation>
    <scope>NUCLEOTIDE SEQUENCE [LARGE SCALE GENOMIC DNA]</scope>
    <source>
        <strain evidence="5">Tuebingen</strain>
    </source>
</reference>
<proteinExistence type="inferred from homology"/>
<organism>
    <name type="scientific">Danio rerio</name>
    <name type="common">Zebrafish</name>
    <name type="synonym">Brachydanio rerio</name>
    <dbReference type="NCBI Taxonomy" id="7955"/>
    <lineage>
        <taxon>Eukaryota</taxon>
        <taxon>Metazoa</taxon>
        <taxon>Chordata</taxon>
        <taxon>Craniata</taxon>
        <taxon>Vertebrata</taxon>
        <taxon>Euteleostomi</taxon>
        <taxon>Actinopterygii</taxon>
        <taxon>Neopterygii</taxon>
        <taxon>Teleostei</taxon>
        <taxon>Ostariophysi</taxon>
        <taxon>Cypriniformes</taxon>
        <taxon>Danionidae</taxon>
        <taxon>Danioninae</taxon>
        <taxon>Danio</taxon>
    </lineage>
</organism>